<gene>
    <name evidence="1" type="primary">lpxC</name>
    <name type="ordered locus">SUN_1975</name>
</gene>
<protein>
    <recommendedName>
        <fullName evidence="1">UDP-3-O-acyl-N-acetylglucosamine deacetylase</fullName>
        <shortName evidence="1">UDP-3-O-acyl-GlcNAc deacetylase</shortName>
        <ecNumber evidence="1">3.5.1.108</ecNumber>
    </recommendedName>
    <alternativeName>
        <fullName evidence="1">UDP-3-O-[R-3-hydroxymyristoyl]-N-acetylglucosamine deacetylase</fullName>
    </alternativeName>
</protein>
<comment type="function">
    <text evidence="1">Catalyzes the hydrolysis of UDP-3-O-myristoyl-N-acetylglucosamine to form UDP-3-O-myristoylglucosamine and acetate, the committed step in lipid A biosynthesis.</text>
</comment>
<comment type="catalytic activity">
    <reaction evidence="1">
        <text>a UDP-3-O-[(3R)-3-hydroxyacyl]-N-acetyl-alpha-D-glucosamine + H2O = a UDP-3-O-[(3R)-3-hydroxyacyl]-alpha-D-glucosamine + acetate</text>
        <dbReference type="Rhea" id="RHEA:67816"/>
        <dbReference type="ChEBI" id="CHEBI:15377"/>
        <dbReference type="ChEBI" id="CHEBI:30089"/>
        <dbReference type="ChEBI" id="CHEBI:137740"/>
        <dbReference type="ChEBI" id="CHEBI:173225"/>
        <dbReference type="EC" id="3.5.1.108"/>
    </reaction>
</comment>
<comment type="cofactor">
    <cofactor evidence="1">
        <name>Zn(2+)</name>
        <dbReference type="ChEBI" id="CHEBI:29105"/>
    </cofactor>
</comment>
<comment type="pathway">
    <text evidence="1">Glycolipid biosynthesis; lipid IV(A) biosynthesis; lipid IV(A) from (3R)-3-hydroxytetradecanoyl-[acyl-carrier-protein] and UDP-N-acetyl-alpha-D-glucosamine: step 2/6.</text>
</comment>
<comment type="similarity">
    <text evidence="1">Belongs to the LpxC family.</text>
</comment>
<organism>
    <name type="scientific">Sulfurovum sp. (strain NBC37-1)</name>
    <dbReference type="NCBI Taxonomy" id="387093"/>
    <lineage>
        <taxon>Bacteria</taxon>
        <taxon>Pseudomonadati</taxon>
        <taxon>Campylobacterota</taxon>
        <taxon>Epsilonproteobacteria</taxon>
        <taxon>Campylobacterales</taxon>
        <taxon>Sulfurovaceae</taxon>
        <taxon>Sulfurovum</taxon>
    </lineage>
</organism>
<sequence>MQQRTIQKAVEVVGIGLHKGEPIRLRLEPLSANAGIVFYREDLALNIPLSPDSVIDTRMATVIGSEKGFISTIEHFLSAVYAYGIDNMRVIVDGNEMPIMDGSSISFCLLLDEAGIKELDVPKKVICVKKAVEIKEGDKFVRLLPSDKATFDFRIKFDHPVIGVQSESFEFGTHNFIEEIARARTFGFAKDIQYLQSQNLALGATLQNAIGLDDHKVLNPEGLRFENEFARHKILDAMGDMMVSGHNILAKYESFAGSHNLNYRLTSKLLADSRNYEFVTVKELQSRAFAKSFA</sequence>
<accession>A6QBQ9</accession>
<keyword id="KW-0378">Hydrolase</keyword>
<keyword id="KW-0441">Lipid A biosynthesis</keyword>
<keyword id="KW-0444">Lipid biosynthesis</keyword>
<keyword id="KW-0443">Lipid metabolism</keyword>
<keyword id="KW-0479">Metal-binding</keyword>
<keyword id="KW-0862">Zinc</keyword>
<reference key="1">
    <citation type="journal article" date="2007" name="Proc. Natl. Acad. Sci. U.S.A.">
        <title>Deep-sea vent epsilon-proteobacterial genomes provide insights into emergence of pathogens.</title>
        <authorList>
            <person name="Nakagawa S."/>
            <person name="Takaki Y."/>
            <person name="Shimamura S."/>
            <person name="Reysenbach A.-L."/>
            <person name="Takai K."/>
            <person name="Horikoshi K."/>
        </authorList>
    </citation>
    <scope>NUCLEOTIDE SEQUENCE [LARGE SCALE GENOMIC DNA]</scope>
    <source>
        <strain>NBC37-1</strain>
    </source>
</reference>
<feature type="chain" id="PRO_1000013237" description="UDP-3-O-acyl-N-acetylglucosamine deacetylase">
    <location>
        <begin position="1"/>
        <end position="294"/>
    </location>
</feature>
<feature type="active site" description="Proton donor" evidence="1">
    <location>
        <position position="259"/>
    </location>
</feature>
<feature type="binding site" evidence="1">
    <location>
        <position position="75"/>
    </location>
    <ligand>
        <name>Zn(2+)</name>
        <dbReference type="ChEBI" id="CHEBI:29105"/>
    </ligand>
</feature>
<feature type="binding site" evidence="1">
    <location>
        <position position="232"/>
    </location>
    <ligand>
        <name>Zn(2+)</name>
        <dbReference type="ChEBI" id="CHEBI:29105"/>
    </ligand>
</feature>
<feature type="binding site" evidence="1">
    <location>
        <position position="236"/>
    </location>
    <ligand>
        <name>Zn(2+)</name>
        <dbReference type="ChEBI" id="CHEBI:29105"/>
    </ligand>
</feature>
<proteinExistence type="inferred from homology"/>
<dbReference type="EC" id="3.5.1.108" evidence="1"/>
<dbReference type="EMBL" id="AP009179">
    <property type="protein sequence ID" value="BAF72918.1"/>
    <property type="molecule type" value="Genomic_DNA"/>
</dbReference>
<dbReference type="RefSeq" id="WP_012083738.1">
    <property type="nucleotide sequence ID" value="NC_009663.1"/>
</dbReference>
<dbReference type="SMR" id="A6QBQ9"/>
<dbReference type="STRING" id="387093.SUN_1975"/>
<dbReference type="KEGG" id="sun:SUN_1975"/>
<dbReference type="eggNOG" id="COG0774">
    <property type="taxonomic scope" value="Bacteria"/>
</dbReference>
<dbReference type="HOGENOM" id="CLU_046528_1_0_7"/>
<dbReference type="OrthoDB" id="9802746at2"/>
<dbReference type="UniPathway" id="UPA00359">
    <property type="reaction ID" value="UER00478"/>
</dbReference>
<dbReference type="Proteomes" id="UP000006378">
    <property type="component" value="Chromosome"/>
</dbReference>
<dbReference type="GO" id="GO:0016020">
    <property type="term" value="C:membrane"/>
    <property type="evidence" value="ECO:0007669"/>
    <property type="project" value="GOC"/>
</dbReference>
<dbReference type="GO" id="GO:0046872">
    <property type="term" value="F:metal ion binding"/>
    <property type="evidence" value="ECO:0007669"/>
    <property type="project" value="UniProtKB-KW"/>
</dbReference>
<dbReference type="GO" id="GO:0103117">
    <property type="term" value="F:UDP-3-O-acyl-N-acetylglucosamine deacetylase activity"/>
    <property type="evidence" value="ECO:0007669"/>
    <property type="project" value="UniProtKB-UniRule"/>
</dbReference>
<dbReference type="GO" id="GO:0009245">
    <property type="term" value="P:lipid A biosynthetic process"/>
    <property type="evidence" value="ECO:0007669"/>
    <property type="project" value="UniProtKB-UniRule"/>
</dbReference>
<dbReference type="Gene3D" id="3.30.230.20">
    <property type="entry name" value="lpxc deacetylase, domain 1"/>
    <property type="match status" value="1"/>
</dbReference>
<dbReference type="Gene3D" id="3.30.1700.10">
    <property type="entry name" value="lpxc deacetylase, domain 2"/>
    <property type="match status" value="1"/>
</dbReference>
<dbReference type="HAMAP" id="MF_00388">
    <property type="entry name" value="LpxC"/>
    <property type="match status" value="1"/>
</dbReference>
<dbReference type="InterPro" id="IPR020568">
    <property type="entry name" value="Ribosomal_Su5_D2-typ_SF"/>
</dbReference>
<dbReference type="InterPro" id="IPR004463">
    <property type="entry name" value="UDP-acyl_GlcNac_deAcase"/>
</dbReference>
<dbReference type="InterPro" id="IPR011334">
    <property type="entry name" value="UDP-acyl_GlcNac_deAcase_C"/>
</dbReference>
<dbReference type="InterPro" id="IPR015870">
    <property type="entry name" value="UDP-acyl_N-AcGlcN_deAcase_N"/>
</dbReference>
<dbReference type="NCBIfam" id="TIGR00325">
    <property type="entry name" value="lpxC"/>
    <property type="match status" value="1"/>
</dbReference>
<dbReference type="PANTHER" id="PTHR33694">
    <property type="entry name" value="UDP-3-O-ACYL-N-ACETYLGLUCOSAMINE DEACETYLASE 1, MITOCHONDRIAL-RELATED"/>
    <property type="match status" value="1"/>
</dbReference>
<dbReference type="PANTHER" id="PTHR33694:SF1">
    <property type="entry name" value="UDP-3-O-ACYL-N-ACETYLGLUCOSAMINE DEACETYLASE 1, MITOCHONDRIAL-RELATED"/>
    <property type="match status" value="1"/>
</dbReference>
<dbReference type="Pfam" id="PF03331">
    <property type="entry name" value="LpxC"/>
    <property type="match status" value="1"/>
</dbReference>
<dbReference type="SUPFAM" id="SSF54211">
    <property type="entry name" value="Ribosomal protein S5 domain 2-like"/>
    <property type="match status" value="2"/>
</dbReference>
<name>LPXC_SULNB</name>
<evidence type="ECO:0000255" key="1">
    <source>
        <dbReference type="HAMAP-Rule" id="MF_00388"/>
    </source>
</evidence>